<keyword id="KW-1003">Cell membrane</keyword>
<keyword id="KW-0297">G-protein coupled receptor</keyword>
<keyword id="KW-0325">Glycoprotein</keyword>
<keyword id="KW-0472">Membrane</keyword>
<keyword id="KW-0552">Olfaction</keyword>
<keyword id="KW-0675">Receptor</keyword>
<keyword id="KW-1185">Reference proteome</keyword>
<keyword id="KW-0716">Sensory transduction</keyword>
<keyword id="KW-0807">Transducer</keyword>
<keyword id="KW-0812">Transmembrane</keyword>
<keyword id="KW-1133">Transmembrane helix</keyword>
<dbReference type="EMBL" id="Z79592">
    <property type="protein sequence ID" value="CAB01853.1"/>
    <property type="molecule type" value="Genomic_DNA"/>
</dbReference>
<dbReference type="SMR" id="Q98914"/>
<dbReference type="STRING" id="9031.ENSGALP00000007042"/>
<dbReference type="GlyCosmos" id="Q98914">
    <property type="glycosylation" value="1 site, No reported glycans"/>
</dbReference>
<dbReference type="GlyGen" id="Q98914">
    <property type="glycosylation" value="1 site"/>
</dbReference>
<dbReference type="PaxDb" id="9031-ENSGALP00000007042"/>
<dbReference type="VEuPathDB" id="HostDB:geneid_428831"/>
<dbReference type="eggNOG" id="ENOG502QVH7">
    <property type="taxonomic scope" value="Eukaryota"/>
</dbReference>
<dbReference type="HOGENOM" id="CLU_012526_1_0_1"/>
<dbReference type="InParanoid" id="Q98914"/>
<dbReference type="Proteomes" id="UP000000539">
    <property type="component" value="Unassembled WGS sequence"/>
</dbReference>
<dbReference type="GO" id="GO:0005886">
    <property type="term" value="C:plasma membrane"/>
    <property type="evidence" value="ECO:0007669"/>
    <property type="project" value="UniProtKB-SubCell"/>
</dbReference>
<dbReference type="GO" id="GO:0004930">
    <property type="term" value="F:G protein-coupled receptor activity"/>
    <property type="evidence" value="ECO:0007669"/>
    <property type="project" value="UniProtKB-KW"/>
</dbReference>
<dbReference type="GO" id="GO:0005549">
    <property type="term" value="F:odorant binding"/>
    <property type="evidence" value="ECO:0000318"/>
    <property type="project" value="GO_Central"/>
</dbReference>
<dbReference type="GO" id="GO:0004984">
    <property type="term" value="F:olfactory receptor activity"/>
    <property type="evidence" value="ECO:0000318"/>
    <property type="project" value="GO_Central"/>
</dbReference>
<dbReference type="FunFam" id="1.20.1070.10:FF:000532">
    <property type="entry name" value="Odorant receptor S3"/>
    <property type="match status" value="1"/>
</dbReference>
<dbReference type="Gene3D" id="1.20.1070.10">
    <property type="entry name" value="Rhodopsin 7-helix transmembrane proteins"/>
    <property type="match status" value="1"/>
</dbReference>
<dbReference type="InterPro" id="IPR017452">
    <property type="entry name" value="GPCR_Rhodpsn_7TM"/>
</dbReference>
<dbReference type="InterPro" id="IPR000725">
    <property type="entry name" value="Olfact_rcpt"/>
</dbReference>
<dbReference type="PANTHER" id="PTHR48018">
    <property type="entry name" value="OLFACTORY RECEPTOR"/>
    <property type="match status" value="1"/>
</dbReference>
<dbReference type="Pfam" id="PF13853">
    <property type="entry name" value="7tm_4"/>
    <property type="match status" value="1"/>
</dbReference>
<dbReference type="PRINTS" id="PR00245">
    <property type="entry name" value="OLFACTORYR"/>
</dbReference>
<dbReference type="SUPFAM" id="SSF81321">
    <property type="entry name" value="Family A G protein-coupled receptor-like"/>
    <property type="match status" value="1"/>
</dbReference>
<dbReference type="PROSITE" id="PS50262">
    <property type="entry name" value="G_PROTEIN_RECEP_F1_2"/>
    <property type="match status" value="1"/>
</dbReference>
<gene>
    <name type="primary">COR9</name>
</gene>
<accession>Q98914</accession>
<proteinExistence type="inferred from homology"/>
<reference key="1">
    <citation type="journal article" date="1996" name="Mech. Dev.">
        <title>Olfaction in birds: differential embryonic expression of nine putative odorant receptor genes in the avian olfactory system.</title>
        <authorList>
            <person name="Nef S."/>
            <person name="Allaman I."/>
            <person name="Fiumelli H."/>
            <person name="de Castro E."/>
            <person name="Nef P."/>
        </authorList>
    </citation>
    <scope>NUCLEOTIDE SEQUENCE [GENOMIC DNA]</scope>
    <source>
        <tissue>Olfactory epithelium</tissue>
    </source>
</reference>
<sequence length="131" mass="14274">VAICSPLLYSTVMTKRVCMQLVVGSYMGGLLNSLTHTCGLLGLPFCGPNVINHYFCDIPPLLQLACSDTHRNETLLLAFSAVIALFTLFVITASYMLILSVILKIQSDDGRKKTFHTCASHLTAITIFFGS</sequence>
<comment type="function">
    <text evidence="3">Odorant receptor.</text>
</comment>
<comment type="subcellular location">
    <subcellularLocation>
        <location>Cell membrane</location>
        <topology>Multi-pass membrane protein</topology>
    </subcellularLocation>
</comment>
<comment type="similarity">
    <text evidence="2">Belongs to the G-protein coupled receptor 1 family.</text>
</comment>
<name>OLF9_CHICK</name>
<organism>
    <name type="scientific">Gallus gallus</name>
    <name type="common">Chicken</name>
    <dbReference type="NCBI Taxonomy" id="9031"/>
    <lineage>
        <taxon>Eukaryota</taxon>
        <taxon>Metazoa</taxon>
        <taxon>Chordata</taxon>
        <taxon>Craniata</taxon>
        <taxon>Vertebrata</taxon>
        <taxon>Euteleostomi</taxon>
        <taxon>Archelosauria</taxon>
        <taxon>Archosauria</taxon>
        <taxon>Dinosauria</taxon>
        <taxon>Saurischia</taxon>
        <taxon>Theropoda</taxon>
        <taxon>Coelurosauria</taxon>
        <taxon>Aves</taxon>
        <taxon>Neognathae</taxon>
        <taxon>Galloanserae</taxon>
        <taxon>Galliformes</taxon>
        <taxon>Phasianidae</taxon>
        <taxon>Phasianinae</taxon>
        <taxon>Gallus</taxon>
    </lineage>
</organism>
<protein>
    <recommendedName>
        <fullName>Olfactory receptor-like protein COR9</fullName>
    </recommendedName>
</protein>
<evidence type="ECO:0000255" key="1"/>
<evidence type="ECO:0000255" key="2">
    <source>
        <dbReference type="PROSITE-ProRule" id="PRU00521"/>
    </source>
</evidence>
<evidence type="ECO:0000305" key="3"/>
<feature type="chain" id="PRO_0000150887" description="Olfactory receptor-like protein COR9">
    <location>
        <begin position="1" status="less than"/>
        <end position="131" status="greater than"/>
    </location>
</feature>
<feature type="topological domain" description="Cytoplasmic" evidence="1">
    <location>
        <begin position="1" status="less than"/>
        <end position="16"/>
    </location>
</feature>
<feature type="transmembrane region" description="Helical; Name=4" evidence="1">
    <location>
        <begin position="17"/>
        <end position="41"/>
    </location>
</feature>
<feature type="topological domain" description="Extracellular" evidence="1">
    <location>
        <begin position="42"/>
        <end position="82"/>
    </location>
</feature>
<feature type="transmembrane region" description="Helical; Name=5" evidence="1">
    <location>
        <begin position="83"/>
        <end position="103"/>
    </location>
</feature>
<feature type="topological domain" description="Cytoplasmic" evidence="1">
    <location>
        <begin position="104"/>
        <end position="116"/>
    </location>
</feature>
<feature type="transmembrane region" description="Helical; Name=6" evidence="1">
    <location>
        <begin position="117"/>
        <end position="131" status="greater than"/>
    </location>
</feature>
<feature type="glycosylation site" description="N-linked (GlcNAc...) asparagine" evidence="1">
    <location>
        <position position="72"/>
    </location>
</feature>
<feature type="non-terminal residue">
    <location>
        <position position="1"/>
    </location>
</feature>
<feature type="non-terminal residue">
    <location>
        <position position="131"/>
    </location>
</feature>